<dbReference type="EC" id="1.11.1.7"/>
<dbReference type="EMBL" id="EU289404">
    <property type="protein sequence ID" value="ACA48489.1"/>
    <property type="molecule type" value="mRNA"/>
</dbReference>
<dbReference type="EMBL" id="EU526903">
    <property type="protein sequence ID" value="ACD44888.1"/>
    <property type="molecule type" value="Genomic_DNA"/>
</dbReference>
<dbReference type="SMR" id="C0IW58"/>
<dbReference type="CAZy" id="AA2">
    <property type="family name" value="Auxiliary Activities 2"/>
</dbReference>
<dbReference type="GlyCosmos" id="C0IW58">
    <property type="glycosylation" value="1 site, No reported glycans"/>
</dbReference>
<dbReference type="GO" id="GO:0005576">
    <property type="term" value="C:extracellular region"/>
    <property type="evidence" value="ECO:0007669"/>
    <property type="project" value="UniProtKB-SubCell"/>
</dbReference>
<dbReference type="GO" id="GO:0020037">
    <property type="term" value="F:heme binding"/>
    <property type="evidence" value="ECO:0007669"/>
    <property type="project" value="InterPro"/>
</dbReference>
<dbReference type="GO" id="GO:0140825">
    <property type="term" value="F:lactoperoxidase activity"/>
    <property type="evidence" value="ECO:0007669"/>
    <property type="project" value="UniProtKB-EC"/>
</dbReference>
<dbReference type="GO" id="GO:0046872">
    <property type="term" value="F:metal ion binding"/>
    <property type="evidence" value="ECO:0007669"/>
    <property type="project" value="UniProtKB-KW"/>
</dbReference>
<dbReference type="GO" id="GO:0034599">
    <property type="term" value="P:cellular response to oxidative stress"/>
    <property type="evidence" value="ECO:0007669"/>
    <property type="project" value="InterPro"/>
</dbReference>
<dbReference type="GO" id="GO:0042744">
    <property type="term" value="P:hydrogen peroxide catabolic process"/>
    <property type="evidence" value="ECO:0007669"/>
    <property type="project" value="UniProtKB-KW"/>
</dbReference>
<dbReference type="GO" id="GO:0000302">
    <property type="term" value="P:response to reactive oxygen species"/>
    <property type="evidence" value="ECO:0007669"/>
    <property type="project" value="TreeGrafter"/>
</dbReference>
<dbReference type="Gene3D" id="1.10.520.10">
    <property type="match status" value="1"/>
</dbReference>
<dbReference type="Gene3D" id="1.10.420.10">
    <property type="entry name" value="Peroxidase, domain 2"/>
    <property type="match status" value="1"/>
</dbReference>
<dbReference type="InterPro" id="IPR044831">
    <property type="entry name" value="Ccp1-like"/>
</dbReference>
<dbReference type="InterPro" id="IPR002016">
    <property type="entry name" value="Haem_peroxidase"/>
</dbReference>
<dbReference type="InterPro" id="IPR010255">
    <property type="entry name" value="Haem_peroxidase_sf"/>
</dbReference>
<dbReference type="InterPro" id="IPR001621">
    <property type="entry name" value="Ligninase"/>
</dbReference>
<dbReference type="InterPro" id="IPR024589">
    <property type="entry name" value="Ligninase_C"/>
</dbReference>
<dbReference type="InterPro" id="IPR019793">
    <property type="entry name" value="Peroxidases_heam-ligand_BS"/>
</dbReference>
<dbReference type="PANTHER" id="PTHR31356:SF66">
    <property type="entry name" value="CATALASE-PEROXIDASE"/>
    <property type="match status" value="1"/>
</dbReference>
<dbReference type="PANTHER" id="PTHR31356">
    <property type="entry name" value="THYLAKOID LUMENAL 29 KDA PROTEIN, CHLOROPLASTIC-RELATED"/>
    <property type="match status" value="1"/>
</dbReference>
<dbReference type="Pfam" id="PF00141">
    <property type="entry name" value="peroxidase"/>
    <property type="match status" value="1"/>
</dbReference>
<dbReference type="Pfam" id="PF11895">
    <property type="entry name" value="Peroxidase_ext"/>
    <property type="match status" value="1"/>
</dbReference>
<dbReference type="PRINTS" id="PR00462">
    <property type="entry name" value="LIGNINASE"/>
</dbReference>
<dbReference type="PRINTS" id="PR00458">
    <property type="entry name" value="PEROXIDASE"/>
</dbReference>
<dbReference type="SUPFAM" id="SSF48113">
    <property type="entry name" value="Heme-dependent peroxidases"/>
    <property type="match status" value="1"/>
</dbReference>
<dbReference type="PROSITE" id="PS00435">
    <property type="entry name" value="PEROXIDASE_1"/>
    <property type="match status" value="1"/>
</dbReference>
<dbReference type="PROSITE" id="PS50873">
    <property type="entry name" value="PEROXIDASE_4"/>
    <property type="match status" value="1"/>
</dbReference>
<protein>
    <recommendedName>
        <fullName>Low-redox potential peroxidase</fullName>
        <ecNumber>1.11.1.7</ecNumber>
    </recommendedName>
    <alternativeName>
        <fullName>Putative ligninolytic peroxidase</fullName>
    </alternativeName>
</protein>
<accession>C0IW58</accession>
<accession>C0IMT9</accession>
<sequence length="330" mass="35770">MRSSTHIFVSFVVYCGVFVTSAIALSNHTNAYQCDRWSNVLNELQANLFHEGQCRSAALRASGTFGGGGADGSIIQFAHTELAYPANEGLEEMVYTLKHFADGHEVSYGDMIQFAGAVALSNCPGSPRLRFYAGRPEAIAPSPPNLLPLPTDPVEKILSRMADAGFNAGDTVALLAAHSIAVQNTIDPSIPDSPLDSTPRIFDTQFYLETLLRGTRYPGKGRGPAQSKSPIEHEFRLASDAAIARHTSTACEWQSFIDNQEGLRSAFRNAMVKLANQGHDNLVDCSFVIPVPPPWNLPVEYPSGKSRSDVEQSCSDVPFPTISLNSDVHD</sequence>
<evidence type="ECO:0000255" key="1"/>
<evidence type="ECO:0000255" key="2">
    <source>
        <dbReference type="PROSITE-ProRule" id="PRU00297"/>
    </source>
</evidence>
<evidence type="ECO:0000269" key="3">
    <source>
    </source>
</evidence>
<evidence type="ECO:0000305" key="4"/>
<name>LNP_TAICA</name>
<feature type="signal peptide" evidence="1">
    <location>
        <begin position="1"/>
        <end position="24"/>
    </location>
</feature>
<feature type="chain" id="PRO_0000393299" description="Low-redox potential peroxidase">
    <location>
        <begin position="25"/>
        <end position="330"/>
    </location>
</feature>
<feature type="binding site" evidence="2">
    <location>
        <position position="69"/>
    </location>
    <ligand>
        <name>Ca(2+)</name>
        <dbReference type="ChEBI" id="CHEBI:29108"/>
        <label>1</label>
    </ligand>
</feature>
<feature type="binding site" evidence="2">
    <location>
        <position position="71"/>
    </location>
    <ligand>
        <name>Ca(2+)</name>
        <dbReference type="ChEBI" id="CHEBI:29108"/>
        <label>1</label>
    </ligand>
</feature>
<feature type="binding site" evidence="2">
    <location>
        <position position="73"/>
    </location>
    <ligand>
        <name>Ca(2+)</name>
        <dbReference type="ChEBI" id="CHEBI:29108"/>
        <label>1</label>
    </ligand>
</feature>
<feature type="binding site" description="axial binding residue" evidence="2">
    <location>
        <position position="178"/>
    </location>
    <ligand>
        <name>heme b</name>
        <dbReference type="ChEBI" id="CHEBI:60344"/>
    </ligand>
    <ligandPart>
        <name>Fe</name>
        <dbReference type="ChEBI" id="CHEBI:18248"/>
    </ligandPart>
</feature>
<feature type="binding site" evidence="2">
    <location>
        <position position="179"/>
    </location>
    <ligand>
        <name>Ca(2+)</name>
        <dbReference type="ChEBI" id="CHEBI:29108"/>
        <label>2</label>
    </ligand>
</feature>
<feature type="binding site" evidence="2">
    <location>
        <position position="196"/>
    </location>
    <ligand>
        <name>Ca(2+)</name>
        <dbReference type="ChEBI" id="CHEBI:29108"/>
        <label>2</label>
    </ligand>
</feature>
<feature type="binding site" evidence="2">
    <location>
        <position position="198"/>
    </location>
    <ligand>
        <name>Ca(2+)</name>
        <dbReference type="ChEBI" id="CHEBI:29108"/>
        <label>2</label>
    </ligand>
</feature>
<feature type="binding site" evidence="2">
    <location>
        <position position="203"/>
    </location>
    <ligand>
        <name>Ca(2+)</name>
        <dbReference type="ChEBI" id="CHEBI:29108"/>
        <label>2</label>
    </ligand>
</feature>
<feature type="glycosylation site" description="N-linked (GlcNAc...) asparagine" evidence="1">
    <location>
        <position position="27"/>
    </location>
</feature>
<feature type="disulfide bond" evidence="2">
    <location>
        <begin position="34"/>
        <end position="285"/>
    </location>
</feature>
<feature type="disulfide bond" evidence="2">
    <location>
        <begin position="54"/>
        <end position="123"/>
    </location>
</feature>
<feature type="disulfide bond" evidence="2">
    <location>
        <begin position="251"/>
        <end position="314"/>
    </location>
</feature>
<feature type="sequence conflict" description="In Ref. 1; ACA48489." evidence="4" ref="1">
    <original>N</original>
    <variation>K</variation>
    <location>
        <position position="184"/>
    </location>
</feature>
<feature type="sequence conflict" description="In Ref. 1; ACA48489." evidence="4" ref="1">
    <original>P</original>
    <variation>L</variation>
    <location>
        <position position="230"/>
    </location>
</feature>
<feature type="sequence conflict" description="In Ref. 1; ACA48489." evidence="4" ref="1">
    <original>S</original>
    <variation>P</variation>
    <location>
        <position position="313"/>
    </location>
</feature>
<keyword id="KW-0106">Calcium</keyword>
<keyword id="KW-1015">Disulfide bond</keyword>
<keyword id="KW-0325">Glycoprotein</keyword>
<keyword id="KW-0349">Heme</keyword>
<keyword id="KW-0376">Hydrogen peroxide</keyword>
<keyword id="KW-0408">Iron</keyword>
<keyword id="KW-0479">Metal-binding</keyword>
<keyword id="KW-0560">Oxidoreductase</keyword>
<keyword id="KW-0575">Peroxidase</keyword>
<keyword id="KW-0964">Secreted</keyword>
<keyword id="KW-0732">Signal</keyword>
<reference key="1">
    <citation type="journal article" date="2009" name="Microbiology">
        <title>Cloning and heterologous expression of a novel ligninolytic peroxidase gene from poroid brown-rot fungus Antrodia cinnamomea.</title>
        <authorList>
            <person name="Huang S.T."/>
            <person name="Tzean S.S."/>
            <person name="Tsai B.Y."/>
            <person name="Hsieh H.J."/>
        </authorList>
    </citation>
    <scope>NUCLEOTIDE SEQUENCE [GENOMIC DNA / MRNA]</scope>
    <scope>FUNCTION</scope>
    <scope>BIOPHYSICOCHEMICAL PROPERTIES</scope>
    <scope>SUBCELLULAR LOCATION</scope>
    <source>
        <strain>ACT1</strain>
    </source>
</reference>
<organism>
    <name type="scientific">Taiwanofungus camphoratus</name>
    <name type="common">Poroid brown-rot fungus</name>
    <name type="synonym">Antrodia camphorata</name>
    <dbReference type="NCBI Taxonomy" id="2696576"/>
    <lineage>
        <taxon>Eukaryota</taxon>
        <taxon>Fungi</taxon>
        <taxon>Dikarya</taxon>
        <taxon>Basidiomycota</taxon>
        <taxon>Agaricomycotina</taxon>
        <taxon>Agaricomycetes</taxon>
        <taxon>Polyporales</taxon>
        <taxon>Taiwanofungaceae</taxon>
        <taxon>Taiwanofungus</taxon>
    </lineage>
</organism>
<comment type="function">
    <text evidence="3">Can oxidize the lignin redox mediator veratryl alcohol to veratryl aldehyde. May be involved in oxidation of lignocellulose substrates.</text>
</comment>
<comment type="catalytic activity">
    <reaction>
        <text>2 a phenolic donor + H2O2 = 2 a phenolic radical donor + 2 H2O</text>
        <dbReference type="Rhea" id="RHEA:56136"/>
        <dbReference type="ChEBI" id="CHEBI:15377"/>
        <dbReference type="ChEBI" id="CHEBI:16240"/>
        <dbReference type="ChEBI" id="CHEBI:139520"/>
        <dbReference type="ChEBI" id="CHEBI:139521"/>
        <dbReference type="EC" id="1.11.1.7"/>
    </reaction>
</comment>
<comment type="cofactor">
    <cofactor evidence="2">
        <name>Ca(2+)</name>
        <dbReference type="ChEBI" id="CHEBI:29108"/>
    </cofactor>
    <text evidence="2">Binds 2 calcium ions per subunit.</text>
</comment>
<comment type="cofactor">
    <cofactor evidence="2">
        <name>heme b</name>
        <dbReference type="ChEBI" id="CHEBI:60344"/>
    </cofactor>
    <text evidence="2">Binds 1 heme b (iron(II)-protoporphyrin IX) group per subunit.</text>
</comment>
<comment type="biophysicochemical properties">
    <kinetics>
        <KM evidence="3">13.1 uM for veratryl alcohol</KM>
    </kinetics>
</comment>
<comment type="subcellular location">
    <subcellularLocation>
        <location evidence="2 3">Secreted</location>
    </subcellularLocation>
</comment>
<comment type="miscellaneous">
    <text>In comparison to other ligninolytic peroxidases, lacks a Mn(2+)-oxidation site (as in manganese peroxidases (MnP) and versatile peroxidase (VP)) and an exposed tryptophan responsible for high redox-potential substrate oxidation (as in lignin peroxidase (LiP) and VP).</text>
</comment>
<comment type="similarity">
    <text evidence="4">Belongs to the peroxidase family. Ligninase subfamily.</text>
</comment>
<gene>
    <name type="primary">LnP</name>
</gene>
<proteinExistence type="evidence at protein level"/>